<sequence length="344" mass="37358">MILKPENEKKLIIDVLKKFGVPEEDAKITADVFVDADLKGFTSHGIGRFPQYITALKLGNINPKPDIKIVKESPATAVIDGDLGLGQVVGKKAMELAIKKAKNVGVGVVATRNANHFGIAGYYSELAMNQDMIGITITNTEPAMAPFGGKEKILGTNPIAIAFKGNKYKFSLDMATASIARGKILEALRKKIKIPEGCAVDKDGKPTTDPAKALEGCILPFGGPKGYGLALAIEMLSAIGGAEVGTKVKGTANPEERCTKGDLFIAINPEFFMGKEEFKRKVDELLDEIKNSEPAEGFEILIPGEIEERNKMKRKDGFEIDKNLYNQLKEICNELGLNIEDYIE</sequence>
<reference key="1">
    <citation type="journal article" date="1996" name="Science">
        <title>Complete genome sequence of the methanogenic archaeon, Methanococcus jannaschii.</title>
        <authorList>
            <person name="Bult C.J."/>
            <person name="White O."/>
            <person name="Olsen G.J."/>
            <person name="Zhou L."/>
            <person name="Fleischmann R.D."/>
            <person name="Sutton G.G."/>
            <person name="Blake J.A."/>
            <person name="FitzGerald L.M."/>
            <person name="Clayton R.A."/>
            <person name="Gocayne J.D."/>
            <person name="Kerlavage A.R."/>
            <person name="Dougherty B.A."/>
            <person name="Tomb J.-F."/>
            <person name="Adams M.D."/>
            <person name="Reich C.I."/>
            <person name="Overbeek R."/>
            <person name="Kirkness E.F."/>
            <person name="Weinstock K.G."/>
            <person name="Merrick J.M."/>
            <person name="Glodek A."/>
            <person name="Scott J.L."/>
            <person name="Geoghagen N.S.M."/>
            <person name="Weidman J.F."/>
            <person name="Fuhrmann J.L."/>
            <person name="Nguyen D."/>
            <person name="Utterback T.R."/>
            <person name="Kelley J.M."/>
            <person name="Peterson J.D."/>
            <person name="Sadow P.W."/>
            <person name="Hanna M.C."/>
            <person name="Cotton M.D."/>
            <person name="Roberts K.M."/>
            <person name="Hurst M.A."/>
            <person name="Kaine B.P."/>
            <person name="Borodovsky M."/>
            <person name="Klenk H.-P."/>
            <person name="Fraser C.M."/>
            <person name="Smith H.O."/>
            <person name="Woese C.R."/>
            <person name="Venter J.C."/>
        </authorList>
    </citation>
    <scope>NUCLEOTIDE SEQUENCE [LARGE SCALE GENOMIC DNA]</scope>
    <source>
        <strain>ATCC 43067 / DSM 2661 / JAL-1 / JCM 10045 / NBRC 100440</strain>
    </source>
</reference>
<reference key="2">
    <citation type="journal article" date="2000" name="J. Bacteriol.">
        <title>Identification of an archaeal 2-hydroxy acid dehydrogenase catalyzing reactions involved in coenzyme biosynthesis in methanoarchaea.</title>
        <authorList>
            <person name="Graupner M."/>
            <person name="Xu H."/>
            <person name="White R.H."/>
        </authorList>
    </citation>
    <scope>FUNCTION</scope>
</reference>
<evidence type="ECO:0000269" key="1">
    <source>
    </source>
</evidence>
<evidence type="ECO:0000305" key="2"/>
<evidence type="ECO:0007829" key="3">
    <source>
        <dbReference type="PDB" id="2X06"/>
    </source>
</evidence>
<gene>
    <name type="primary">comC</name>
    <name type="synonym">mdh</name>
    <name type="ordered locus">MJ1425</name>
</gene>
<protein>
    <recommendedName>
        <fullName>L-sulfolactate dehydrogenase</fullName>
        <ecNumber>1.1.1.337</ecNumber>
    </recommendedName>
    <alternativeName>
        <fullName>(R)-2-hydroxyacid dehydrogenase</fullName>
    </alternativeName>
    <alternativeName>
        <fullName>(R)-sulfolactate dehydrogenase</fullName>
    </alternativeName>
    <alternativeName>
        <fullName>L-2-hydroxycarboxylate dehydrogenase (NAD(+))</fullName>
    </alternativeName>
</protein>
<comment type="function">
    <text evidence="1">Catalyzes the reduction of sulfopyruvate to (R)-sulfolactate much more efficiently than the reverse reaction. Also catalyzes the reduction of oxaloacetate, alpha-ketoglutarate, and to a much lower extent, KHTCA, but not pyruvate. Involved in the biosynthesis of both coenzyme M (with (R)-sulfolactate) and methanopterin (with alpha-ketoglutarate).</text>
</comment>
<comment type="catalytic activity">
    <reaction>
        <text>a (2S)-2-hydroxycarboxylate + NAD(+) = a 2-oxocarboxylate + NADH + H(+)</text>
        <dbReference type="Rhea" id="RHEA:34555"/>
        <dbReference type="ChEBI" id="CHEBI:15378"/>
        <dbReference type="ChEBI" id="CHEBI:35179"/>
        <dbReference type="ChEBI" id="CHEBI:57540"/>
        <dbReference type="ChEBI" id="CHEBI:57945"/>
        <dbReference type="ChEBI" id="CHEBI:58123"/>
        <dbReference type="EC" id="1.1.1.337"/>
    </reaction>
</comment>
<comment type="pathway">
    <text>Cofactor biosynthesis; coenzyme M biosynthesis; sulfoacetaldehyde from phosphoenolpyruvate and sulfite: step 3/4.</text>
</comment>
<comment type="pathway">
    <text>Cofactor biosynthesis; 5,6,7,8-tetrahydromethanopterin biosynthesis.</text>
</comment>
<comment type="subcellular location">
    <subcellularLocation>
        <location>Cytoplasm</location>
    </subcellularLocation>
</comment>
<comment type="similarity">
    <text evidence="2">Belongs to the LDH2/MDH2 oxidoreductase family.</text>
</comment>
<keyword id="KW-0002">3D-structure</keyword>
<keyword id="KW-0174">Coenzyme M biosynthesis</keyword>
<keyword id="KW-0963">Cytoplasm</keyword>
<keyword id="KW-0520">NAD</keyword>
<keyword id="KW-0560">Oxidoreductase</keyword>
<keyword id="KW-1185">Reference proteome</keyword>
<name>COMC_METJA</name>
<feature type="chain" id="PRO_0000083824" description="L-sulfolactate dehydrogenase">
    <location>
        <begin position="1"/>
        <end position="344"/>
    </location>
</feature>
<feature type="helix" evidence="3">
    <location>
        <begin position="5"/>
        <end position="18"/>
    </location>
</feature>
<feature type="helix" evidence="3">
    <location>
        <begin position="23"/>
        <end position="39"/>
    </location>
</feature>
<feature type="helix" evidence="3">
    <location>
        <begin position="42"/>
        <end position="44"/>
    </location>
</feature>
<feature type="helix" evidence="3">
    <location>
        <begin position="46"/>
        <end position="48"/>
    </location>
</feature>
<feature type="helix" evidence="3">
    <location>
        <begin position="49"/>
        <end position="57"/>
    </location>
</feature>
<feature type="strand" evidence="3">
    <location>
        <begin position="60"/>
        <end position="64"/>
    </location>
</feature>
<feature type="strand" evidence="3">
    <location>
        <begin position="68"/>
        <end position="72"/>
    </location>
</feature>
<feature type="strand" evidence="3">
    <location>
        <begin position="74"/>
        <end position="80"/>
    </location>
</feature>
<feature type="helix" evidence="3">
    <location>
        <begin position="86"/>
        <end position="104"/>
    </location>
</feature>
<feature type="strand" evidence="3">
    <location>
        <begin position="105"/>
        <end position="113"/>
    </location>
</feature>
<feature type="helix" evidence="3">
    <location>
        <begin position="121"/>
        <end position="128"/>
    </location>
</feature>
<feature type="turn" evidence="3">
    <location>
        <begin position="129"/>
        <end position="131"/>
    </location>
</feature>
<feature type="strand" evidence="3">
    <location>
        <begin position="132"/>
        <end position="138"/>
    </location>
</feature>
<feature type="strand" evidence="3">
    <location>
        <begin position="158"/>
        <end position="164"/>
    </location>
</feature>
<feature type="strand" evidence="3">
    <location>
        <begin position="169"/>
        <end position="179"/>
    </location>
</feature>
<feature type="helix" evidence="3">
    <location>
        <begin position="182"/>
        <end position="189"/>
    </location>
</feature>
<feature type="strand" evidence="3">
    <location>
        <begin position="198"/>
        <end position="200"/>
    </location>
</feature>
<feature type="strand" evidence="3">
    <location>
        <begin position="202"/>
        <end position="206"/>
    </location>
</feature>
<feature type="helix" evidence="3">
    <location>
        <begin position="210"/>
        <end position="215"/>
    </location>
</feature>
<feature type="strand" evidence="3">
    <location>
        <begin position="216"/>
        <end position="218"/>
    </location>
</feature>
<feature type="strand" evidence="3">
    <location>
        <begin position="220"/>
        <end position="222"/>
    </location>
</feature>
<feature type="helix" evidence="3">
    <location>
        <begin position="223"/>
        <end position="236"/>
    </location>
</feature>
<feature type="turn" evidence="3">
    <location>
        <begin position="237"/>
        <end position="241"/>
    </location>
</feature>
<feature type="helix" evidence="3">
    <location>
        <begin position="245"/>
        <end position="247"/>
    </location>
</feature>
<feature type="strand" evidence="3">
    <location>
        <begin position="261"/>
        <end position="267"/>
    </location>
</feature>
<feature type="helix" evidence="3">
    <location>
        <begin position="269"/>
        <end position="271"/>
    </location>
</feature>
<feature type="helix" evidence="3">
    <location>
        <begin position="275"/>
        <end position="290"/>
    </location>
</feature>
<feature type="helix" evidence="3">
    <location>
        <begin position="305"/>
        <end position="313"/>
    </location>
</feature>
<feature type="turn" evidence="3">
    <location>
        <begin position="314"/>
        <end position="316"/>
    </location>
</feature>
<feature type="helix" evidence="3">
    <location>
        <begin position="322"/>
        <end position="334"/>
    </location>
</feature>
<feature type="helix" evidence="3">
    <location>
        <begin position="339"/>
        <end position="341"/>
    </location>
</feature>
<accession>Q58820</accession>
<proteinExistence type="evidence at protein level"/>
<dbReference type="EC" id="1.1.1.337"/>
<dbReference type="EMBL" id="L77117">
    <property type="protein sequence ID" value="AAB99436.1"/>
    <property type="molecule type" value="Genomic_DNA"/>
</dbReference>
<dbReference type="PIR" id="H64477">
    <property type="entry name" value="H64477"/>
</dbReference>
<dbReference type="RefSeq" id="WP_010870943.1">
    <property type="nucleotide sequence ID" value="NC_000909.1"/>
</dbReference>
<dbReference type="PDB" id="2X06">
    <property type="method" value="X-ray"/>
    <property type="resolution" value="2.50 A"/>
    <property type="chains" value="A/B/C/D/E/F/G/H=1-344"/>
</dbReference>
<dbReference type="PDBsum" id="2X06"/>
<dbReference type="SMR" id="Q58820"/>
<dbReference type="FunCoup" id="Q58820">
    <property type="interactions" value="111"/>
</dbReference>
<dbReference type="STRING" id="243232.MJ_1425"/>
<dbReference type="PaxDb" id="243232-MJ_1425"/>
<dbReference type="EnsemblBacteria" id="AAB99436">
    <property type="protein sequence ID" value="AAB99436"/>
    <property type="gene ID" value="MJ_1425"/>
</dbReference>
<dbReference type="GeneID" id="1452329"/>
<dbReference type="KEGG" id="mja:MJ_1425"/>
<dbReference type="eggNOG" id="arCOG04874">
    <property type="taxonomic scope" value="Archaea"/>
</dbReference>
<dbReference type="HOGENOM" id="CLU_040452_3_1_2"/>
<dbReference type="InParanoid" id="Q58820"/>
<dbReference type="OrthoDB" id="40552at2157"/>
<dbReference type="PhylomeDB" id="Q58820"/>
<dbReference type="BioCyc" id="MetaCyc:MONOMER-2264"/>
<dbReference type="BRENDA" id="1.1.1.337">
    <property type="organism ID" value="3260"/>
</dbReference>
<dbReference type="SABIO-RK" id="Q58820"/>
<dbReference type="UniPathway" id="UPA00065"/>
<dbReference type="UniPathway" id="UPA00355">
    <property type="reaction ID" value="UER00471"/>
</dbReference>
<dbReference type="EvolutionaryTrace" id="Q58820"/>
<dbReference type="Proteomes" id="UP000000805">
    <property type="component" value="Chromosome"/>
</dbReference>
<dbReference type="GO" id="GO:0005737">
    <property type="term" value="C:cytoplasm"/>
    <property type="evidence" value="ECO:0007669"/>
    <property type="project" value="UniProtKB-SubCell"/>
</dbReference>
<dbReference type="GO" id="GO:0102443">
    <property type="term" value="F:L-2-hydroxycarboxylate dehydrogenase (NAD+) activity"/>
    <property type="evidence" value="ECO:0007669"/>
    <property type="project" value="UniProtKB-EC"/>
</dbReference>
<dbReference type="GO" id="GO:0050545">
    <property type="term" value="F:sulfopyruvate decarboxylase activity"/>
    <property type="evidence" value="ECO:0000314"/>
    <property type="project" value="MENGO"/>
</dbReference>
<dbReference type="GO" id="GO:0019295">
    <property type="term" value="P:coenzyme M biosynthetic process"/>
    <property type="evidence" value="ECO:0007669"/>
    <property type="project" value="UniProtKB-UniPathway"/>
</dbReference>
<dbReference type="Gene3D" id="1.10.1530.10">
    <property type="match status" value="1"/>
</dbReference>
<dbReference type="Gene3D" id="3.30.1370.60">
    <property type="entry name" value="Hypothetical oxidoreductase yiak, domain 2"/>
    <property type="match status" value="1"/>
</dbReference>
<dbReference type="InterPro" id="IPR053453">
    <property type="entry name" value="LDH2/MDH2_Oxidoreductase"/>
</dbReference>
<dbReference type="InterPro" id="IPR043144">
    <property type="entry name" value="Mal/L-sulf/L-lact_DH-like_ah"/>
</dbReference>
<dbReference type="InterPro" id="IPR043143">
    <property type="entry name" value="Mal/L-sulf/L-lact_DH-like_NADP"/>
</dbReference>
<dbReference type="InterPro" id="IPR036111">
    <property type="entry name" value="Mal/L-sulfo/L-lacto_DH-like_sf"/>
</dbReference>
<dbReference type="InterPro" id="IPR003767">
    <property type="entry name" value="Malate/L-lactate_DH-like"/>
</dbReference>
<dbReference type="NCBIfam" id="NF040650">
    <property type="entry name" value="sulfolac_dhydr"/>
    <property type="match status" value="1"/>
</dbReference>
<dbReference type="PANTHER" id="PTHR11091:SF0">
    <property type="entry name" value="MALATE DEHYDROGENASE"/>
    <property type="match status" value="1"/>
</dbReference>
<dbReference type="PANTHER" id="PTHR11091">
    <property type="entry name" value="OXIDOREDUCTASE-RELATED"/>
    <property type="match status" value="1"/>
</dbReference>
<dbReference type="Pfam" id="PF02615">
    <property type="entry name" value="Ldh_2"/>
    <property type="match status" value="1"/>
</dbReference>
<dbReference type="SUPFAM" id="SSF89733">
    <property type="entry name" value="L-sulfolactate dehydrogenase-like"/>
    <property type="match status" value="1"/>
</dbReference>
<organism>
    <name type="scientific">Methanocaldococcus jannaschii (strain ATCC 43067 / DSM 2661 / JAL-1 / JCM 10045 / NBRC 100440)</name>
    <name type="common">Methanococcus jannaschii</name>
    <dbReference type="NCBI Taxonomy" id="243232"/>
    <lineage>
        <taxon>Archaea</taxon>
        <taxon>Methanobacteriati</taxon>
        <taxon>Methanobacteriota</taxon>
        <taxon>Methanomada group</taxon>
        <taxon>Methanococci</taxon>
        <taxon>Methanococcales</taxon>
        <taxon>Methanocaldococcaceae</taxon>
        <taxon>Methanocaldococcus</taxon>
    </lineage>
</organism>